<sequence>MDENNHGVSSSSLPPFLTKTYEMVDDSSSDSIVSWSQSNKSFIVWNPPEFSRDLLPRFFKHNNFSSFIRQLNTYGFRKADPEQWEFANDDFVRGQPHLMKNIHRRKPVHSHSLPNLQAQLNPLTDSERVRMNNQIERLTKEKEGLLEELHKQDEEREVFEMQVKELKERLQHMEKRQKTMVSFVSQVLEKPGLALNLSPCVPETNERKRRFPRIEFFPDEPMLEENKTCVVVREEGSTSPSSHTREHQVEQLESSIAIWENLVSDSCESMLQSRSMMTLDVDESSTFPESPPLSCIQLSVDSRLKSPPSPRIIDMNCEPDGSKEQNTVAAPPPPPVAGANDGFWQQFFSENPGSTEQREVQLERKDDKDKAGVRTEKCWWNSRNVNAITEQLGHLTSSERS</sequence>
<gene>
    <name type="primary">HSFA4A</name>
    <name type="synonym">HSF15</name>
    <name type="synonym">HSF21</name>
    <name type="ordered locus">At4g18880</name>
    <name type="ORF">F13C5.50</name>
</gene>
<comment type="function">
    <text>Transcriptional activator that specifically binds DNA sequence 5'-AGAAnnTTCT-3' known as heat shock promoter elements (HSE).</text>
</comment>
<comment type="subunit">
    <text evidence="1">Homotrimer.</text>
</comment>
<comment type="interaction">
    <interactant intactId="EBI-25511393">
        <id>O49403</id>
    </interactant>
    <interactant intactId="EBI-4449491">
        <id>Q9C5J9</id>
        <label>LIP1</label>
    </interactant>
    <organismsDiffer>false</organismsDiffer>
    <experiments>4</experiments>
</comment>
<comment type="subcellular location">
    <subcellularLocation>
        <location evidence="5">Cytoplasm</location>
    </subcellularLocation>
    <subcellularLocation>
        <location evidence="5">Nucleus</location>
    </subcellularLocation>
</comment>
<comment type="domain">
    <text evidence="4">The hydrophobic-rich region (HR-A/B) corresponds to the oligomerization domain. AHA motifs are transcriptional activator elements.</text>
</comment>
<comment type="PTM">
    <text evidence="1">Exhibits temperature-dependent phosphorylation.</text>
</comment>
<comment type="similarity">
    <text evidence="5">Belongs to the HSF family. Class A subfamily.</text>
</comment>
<protein>
    <recommendedName>
        <fullName>Heat stress transcription factor A-4a</fullName>
        <shortName>AtHsfA4a</shortName>
    </recommendedName>
    <alternativeName>
        <fullName>AtHsf-15</fullName>
    </alternativeName>
    <alternativeName>
        <fullName>Heat shock factor protein 21</fullName>
        <shortName>HSF 21</shortName>
    </alternativeName>
    <alternativeName>
        <fullName>Heat shock transcription factor 21</fullName>
        <shortName>HSTF 21</shortName>
    </alternativeName>
</protein>
<feature type="chain" id="PRO_0000270804" description="Heat stress transcription factor A-4a">
    <location>
        <begin position="1"/>
        <end position="401"/>
    </location>
</feature>
<feature type="DNA-binding region" evidence="1">
    <location>
        <begin position="13"/>
        <end position="107"/>
    </location>
</feature>
<feature type="region of interest" description="Hydrophobic repeat HR-A/B">
    <location>
        <begin position="122"/>
        <end position="188"/>
    </location>
</feature>
<feature type="region of interest" description="Disordered" evidence="3">
    <location>
        <begin position="351"/>
        <end position="373"/>
    </location>
</feature>
<feature type="short sequence motif" description="Nuclear localization signal" evidence="2">
    <location>
        <begin position="207"/>
        <end position="213"/>
    </location>
</feature>
<feature type="short sequence motif" description="AHA1">
    <location>
        <begin position="256"/>
        <end position="265"/>
    </location>
</feature>
<feature type="short sequence motif" description="AHA2">
    <location>
        <begin position="341"/>
        <end position="350"/>
    </location>
</feature>
<feature type="short sequence motif" description="Nuclear export signal" evidence="2">
    <location>
        <begin position="388"/>
        <end position="395"/>
    </location>
</feature>
<feature type="compositionally biased region" description="Basic and acidic residues" evidence="3">
    <location>
        <begin position="356"/>
        <end position="373"/>
    </location>
</feature>
<reference key="1">
    <citation type="journal article" date="1999" name="Nature">
        <title>Sequence and analysis of chromosome 4 of the plant Arabidopsis thaliana.</title>
        <authorList>
            <person name="Mayer K.F.X."/>
            <person name="Schueller C."/>
            <person name="Wambutt R."/>
            <person name="Murphy G."/>
            <person name="Volckaert G."/>
            <person name="Pohl T."/>
            <person name="Duesterhoeft A."/>
            <person name="Stiekema W."/>
            <person name="Entian K.-D."/>
            <person name="Terryn N."/>
            <person name="Harris B."/>
            <person name="Ansorge W."/>
            <person name="Brandt P."/>
            <person name="Grivell L.A."/>
            <person name="Rieger M."/>
            <person name="Weichselgartner M."/>
            <person name="de Simone V."/>
            <person name="Obermaier B."/>
            <person name="Mache R."/>
            <person name="Mueller M."/>
            <person name="Kreis M."/>
            <person name="Delseny M."/>
            <person name="Puigdomenech P."/>
            <person name="Watson M."/>
            <person name="Schmidtheini T."/>
            <person name="Reichert B."/>
            <person name="Portetelle D."/>
            <person name="Perez-Alonso M."/>
            <person name="Boutry M."/>
            <person name="Bancroft I."/>
            <person name="Vos P."/>
            <person name="Hoheisel J."/>
            <person name="Zimmermann W."/>
            <person name="Wedler H."/>
            <person name="Ridley P."/>
            <person name="Langham S.-A."/>
            <person name="McCullagh B."/>
            <person name="Bilham L."/>
            <person name="Robben J."/>
            <person name="van der Schueren J."/>
            <person name="Grymonprez B."/>
            <person name="Chuang Y.-J."/>
            <person name="Vandenbussche F."/>
            <person name="Braeken M."/>
            <person name="Weltjens I."/>
            <person name="Voet M."/>
            <person name="Bastiaens I."/>
            <person name="Aert R."/>
            <person name="Defoor E."/>
            <person name="Weitzenegger T."/>
            <person name="Bothe G."/>
            <person name="Ramsperger U."/>
            <person name="Hilbert H."/>
            <person name="Braun M."/>
            <person name="Holzer E."/>
            <person name="Brandt A."/>
            <person name="Peters S."/>
            <person name="van Staveren M."/>
            <person name="Dirkse W."/>
            <person name="Mooijman P."/>
            <person name="Klein Lankhorst R."/>
            <person name="Rose M."/>
            <person name="Hauf J."/>
            <person name="Koetter P."/>
            <person name="Berneiser S."/>
            <person name="Hempel S."/>
            <person name="Feldpausch M."/>
            <person name="Lamberth S."/>
            <person name="Van den Daele H."/>
            <person name="De Keyser A."/>
            <person name="Buysshaert C."/>
            <person name="Gielen J."/>
            <person name="Villarroel R."/>
            <person name="De Clercq R."/>
            <person name="van Montagu M."/>
            <person name="Rogers J."/>
            <person name="Cronin A."/>
            <person name="Quail M.A."/>
            <person name="Bray-Allen S."/>
            <person name="Clark L."/>
            <person name="Doggett J."/>
            <person name="Hall S."/>
            <person name="Kay M."/>
            <person name="Lennard N."/>
            <person name="McLay K."/>
            <person name="Mayes R."/>
            <person name="Pettett A."/>
            <person name="Rajandream M.A."/>
            <person name="Lyne M."/>
            <person name="Benes V."/>
            <person name="Rechmann S."/>
            <person name="Borkova D."/>
            <person name="Bloecker H."/>
            <person name="Scharfe M."/>
            <person name="Grimm M."/>
            <person name="Loehnert T.-H."/>
            <person name="Dose S."/>
            <person name="de Haan M."/>
            <person name="Maarse A.C."/>
            <person name="Schaefer M."/>
            <person name="Mueller-Auer S."/>
            <person name="Gabel C."/>
            <person name="Fuchs M."/>
            <person name="Fartmann B."/>
            <person name="Granderath K."/>
            <person name="Dauner D."/>
            <person name="Herzl A."/>
            <person name="Neumann S."/>
            <person name="Argiriou A."/>
            <person name="Vitale D."/>
            <person name="Liguori R."/>
            <person name="Piravandi E."/>
            <person name="Massenet O."/>
            <person name="Quigley F."/>
            <person name="Clabauld G."/>
            <person name="Muendlein A."/>
            <person name="Felber R."/>
            <person name="Schnabl S."/>
            <person name="Hiller R."/>
            <person name="Schmidt W."/>
            <person name="Lecharny A."/>
            <person name="Aubourg S."/>
            <person name="Chefdor F."/>
            <person name="Cooke R."/>
            <person name="Berger C."/>
            <person name="Monfort A."/>
            <person name="Casacuberta E."/>
            <person name="Gibbons T."/>
            <person name="Weber N."/>
            <person name="Vandenbol M."/>
            <person name="Bargues M."/>
            <person name="Terol J."/>
            <person name="Torres A."/>
            <person name="Perez-Perez A."/>
            <person name="Purnelle B."/>
            <person name="Bent E."/>
            <person name="Johnson S."/>
            <person name="Tacon D."/>
            <person name="Jesse T."/>
            <person name="Heijnen L."/>
            <person name="Schwarz S."/>
            <person name="Scholler P."/>
            <person name="Heber S."/>
            <person name="Francs P."/>
            <person name="Bielke C."/>
            <person name="Frishman D."/>
            <person name="Haase D."/>
            <person name="Lemcke K."/>
            <person name="Mewes H.-W."/>
            <person name="Stocker S."/>
            <person name="Zaccaria P."/>
            <person name="Bevan M."/>
            <person name="Wilson R.K."/>
            <person name="de la Bastide M."/>
            <person name="Habermann K."/>
            <person name="Parnell L."/>
            <person name="Dedhia N."/>
            <person name="Gnoj L."/>
            <person name="Schutz K."/>
            <person name="Huang E."/>
            <person name="Spiegel L."/>
            <person name="Sekhon M."/>
            <person name="Murray J."/>
            <person name="Sheet P."/>
            <person name="Cordes M."/>
            <person name="Abu-Threideh J."/>
            <person name="Stoneking T."/>
            <person name="Kalicki J."/>
            <person name="Graves T."/>
            <person name="Harmon G."/>
            <person name="Edwards J."/>
            <person name="Latreille P."/>
            <person name="Courtney L."/>
            <person name="Cloud J."/>
            <person name="Abbott A."/>
            <person name="Scott K."/>
            <person name="Johnson D."/>
            <person name="Minx P."/>
            <person name="Bentley D."/>
            <person name="Fulton B."/>
            <person name="Miller N."/>
            <person name="Greco T."/>
            <person name="Kemp K."/>
            <person name="Kramer J."/>
            <person name="Fulton L."/>
            <person name="Mardis E."/>
            <person name="Dante M."/>
            <person name="Pepin K."/>
            <person name="Hillier L.W."/>
            <person name="Nelson J."/>
            <person name="Spieth J."/>
            <person name="Ryan E."/>
            <person name="Andrews S."/>
            <person name="Geisel C."/>
            <person name="Layman D."/>
            <person name="Du H."/>
            <person name="Ali J."/>
            <person name="Berghoff A."/>
            <person name="Jones K."/>
            <person name="Drone K."/>
            <person name="Cotton M."/>
            <person name="Joshu C."/>
            <person name="Antonoiu B."/>
            <person name="Zidanic M."/>
            <person name="Strong C."/>
            <person name="Sun H."/>
            <person name="Lamar B."/>
            <person name="Yordan C."/>
            <person name="Ma P."/>
            <person name="Zhong J."/>
            <person name="Preston R."/>
            <person name="Vil D."/>
            <person name="Shekher M."/>
            <person name="Matero A."/>
            <person name="Shah R."/>
            <person name="Swaby I.K."/>
            <person name="O'Shaughnessy A."/>
            <person name="Rodriguez M."/>
            <person name="Hoffman J."/>
            <person name="Till S."/>
            <person name="Granat S."/>
            <person name="Shohdy N."/>
            <person name="Hasegawa A."/>
            <person name="Hameed A."/>
            <person name="Lodhi M."/>
            <person name="Johnson A."/>
            <person name="Chen E."/>
            <person name="Marra M.A."/>
            <person name="Martienssen R."/>
            <person name="McCombie W.R."/>
        </authorList>
    </citation>
    <scope>NUCLEOTIDE SEQUENCE [LARGE SCALE GENOMIC DNA]</scope>
    <source>
        <strain>cv. Columbia</strain>
    </source>
</reference>
<reference key="2">
    <citation type="journal article" date="2017" name="Plant J.">
        <title>Araport11: a complete reannotation of the Arabidopsis thaliana reference genome.</title>
        <authorList>
            <person name="Cheng C.Y."/>
            <person name="Krishnakumar V."/>
            <person name="Chan A.P."/>
            <person name="Thibaud-Nissen F."/>
            <person name="Schobel S."/>
            <person name="Town C.D."/>
        </authorList>
    </citation>
    <scope>GENOME REANNOTATION</scope>
    <source>
        <strain>cv. Columbia</strain>
    </source>
</reference>
<reference key="3">
    <citation type="journal article" date="2003" name="Science">
        <title>Empirical analysis of transcriptional activity in the Arabidopsis genome.</title>
        <authorList>
            <person name="Yamada K."/>
            <person name="Lim J."/>
            <person name="Dale J.M."/>
            <person name="Chen H."/>
            <person name="Shinn P."/>
            <person name="Palm C.J."/>
            <person name="Southwick A.M."/>
            <person name="Wu H.C."/>
            <person name="Kim C.J."/>
            <person name="Nguyen M."/>
            <person name="Pham P.K."/>
            <person name="Cheuk R.F."/>
            <person name="Karlin-Newmann G."/>
            <person name="Liu S.X."/>
            <person name="Lam B."/>
            <person name="Sakano H."/>
            <person name="Wu T."/>
            <person name="Yu G."/>
            <person name="Miranda M."/>
            <person name="Quach H.L."/>
            <person name="Tripp M."/>
            <person name="Chang C.H."/>
            <person name="Lee J.M."/>
            <person name="Toriumi M.J."/>
            <person name="Chan M.M."/>
            <person name="Tang C.C."/>
            <person name="Onodera C.S."/>
            <person name="Deng J.M."/>
            <person name="Akiyama K."/>
            <person name="Ansari Y."/>
            <person name="Arakawa T."/>
            <person name="Banh J."/>
            <person name="Banno F."/>
            <person name="Bowser L."/>
            <person name="Brooks S.Y."/>
            <person name="Carninci P."/>
            <person name="Chao Q."/>
            <person name="Choy N."/>
            <person name="Enju A."/>
            <person name="Goldsmith A.D."/>
            <person name="Gurjal M."/>
            <person name="Hansen N.F."/>
            <person name="Hayashizaki Y."/>
            <person name="Johnson-Hopson C."/>
            <person name="Hsuan V.W."/>
            <person name="Iida K."/>
            <person name="Karnes M."/>
            <person name="Khan S."/>
            <person name="Koesema E."/>
            <person name="Ishida J."/>
            <person name="Jiang P.X."/>
            <person name="Jones T."/>
            <person name="Kawai J."/>
            <person name="Kamiya A."/>
            <person name="Meyers C."/>
            <person name="Nakajima M."/>
            <person name="Narusaka M."/>
            <person name="Seki M."/>
            <person name="Sakurai T."/>
            <person name="Satou M."/>
            <person name="Tamse R."/>
            <person name="Vaysberg M."/>
            <person name="Wallender E.K."/>
            <person name="Wong C."/>
            <person name="Yamamura Y."/>
            <person name="Yuan S."/>
            <person name="Shinozaki K."/>
            <person name="Davis R.W."/>
            <person name="Theologis A."/>
            <person name="Ecker J.R."/>
        </authorList>
    </citation>
    <scope>NUCLEOTIDE SEQUENCE [LARGE SCALE MRNA]</scope>
    <source>
        <strain>cv. Columbia</strain>
    </source>
</reference>
<reference key="4">
    <citation type="journal article" date="1996" name="Cell Stress Chaperones">
        <title>The Hsf world: classification and properties of plant heat stress transcription factors.</title>
        <authorList>
            <person name="Nover L."/>
            <person name="Scharf K.-D."/>
            <person name="Gagliardi D."/>
            <person name="Vergne P."/>
            <person name="Czarnecka-Verner E."/>
            <person name="Gurley W.B."/>
        </authorList>
    </citation>
    <scope>NUCLEOTIDE SEQUENCE [MRNA] OF 4-401</scope>
    <source>
        <strain>cv. Columbia</strain>
        <tissue>Leaf</tissue>
        <tissue>Stem</tissue>
    </source>
</reference>
<reference key="5">
    <citation type="journal article" date="2001" name="Cell Stress Chaperones">
        <title>Arabidopsis and the heat stress transcription factor world: how many heat stress transcription factors do we need?</title>
        <authorList>
            <person name="Nover L."/>
            <person name="Bharti K."/>
            <person name="Doering P."/>
            <person name="Mishra S.K."/>
            <person name="Ganguli A."/>
            <person name="Scharf K.-D."/>
        </authorList>
    </citation>
    <scope>GENE FAMILY</scope>
    <scope>NOMENCLATURE</scope>
    <scope>DOMAIN AHA</scope>
</reference>
<reference key="6">
    <citation type="journal article" date="2008" name="J. Genet. Genomics">
        <title>Genome-wide analysis of heat shock transcription factor families in rice and Arabidopsis.</title>
        <authorList>
            <person name="Guo J."/>
            <person name="Wu J."/>
            <person name="Ji Q."/>
            <person name="Wang C."/>
            <person name="Luo L."/>
            <person name="Yuan Y."/>
            <person name="Wang Y."/>
            <person name="Wang J."/>
        </authorList>
    </citation>
    <scope>GENE FAMILY</scope>
    <scope>NOMENCLATURE</scope>
</reference>
<evidence type="ECO:0000250" key="1"/>
<evidence type="ECO:0000255" key="2"/>
<evidence type="ECO:0000256" key="3">
    <source>
        <dbReference type="SAM" id="MobiDB-lite"/>
    </source>
</evidence>
<evidence type="ECO:0000269" key="4">
    <source>
    </source>
</evidence>
<evidence type="ECO:0000305" key="5"/>
<name>HFA4A_ARATH</name>
<keyword id="KW-0010">Activator</keyword>
<keyword id="KW-0963">Cytoplasm</keyword>
<keyword id="KW-0238">DNA-binding</keyword>
<keyword id="KW-0539">Nucleus</keyword>
<keyword id="KW-0597">Phosphoprotein</keyword>
<keyword id="KW-1185">Reference proteome</keyword>
<keyword id="KW-0677">Repeat</keyword>
<keyword id="KW-0346">Stress response</keyword>
<keyword id="KW-0804">Transcription</keyword>
<keyword id="KW-0805">Transcription regulation</keyword>
<proteinExistence type="evidence at protein level"/>
<accession>O49403</accession>
<accession>O82078</accession>
<dbReference type="EMBL" id="AL021711">
    <property type="protein sequence ID" value="CAA16745.1"/>
    <property type="molecule type" value="Genomic_DNA"/>
</dbReference>
<dbReference type="EMBL" id="AL161549">
    <property type="protein sequence ID" value="CAB78890.1"/>
    <property type="molecule type" value="Genomic_DNA"/>
</dbReference>
<dbReference type="EMBL" id="CP002687">
    <property type="protein sequence ID" value="AEE84101.1"/>
    <property type="molecule type" value="Genomic_DNA"/>
</dbReference>
<dbReference type="EMBL" id="AY125512">
    <property type="protein sequence ID" value="AAM78104.1"/>
    <property type="molecule type" value="mRNA"/>
</dbReference>
<dbReference type="EMBL" id="BT001049">
    <property type="protein sequence ID" value="AAN46803.1"/>
    <property type="molecule type" value="mRNA"/>
</dbReference>
<dbReference type="EMBL" id="U68561">
    <property type="protein sequence ID" value="AAC31792.1"/>
    <property type="molecule type" value="mRNA"/>
</dbReference>
<dbReference type="PIR" id="T05025">
    <property type="entry name" value="T05025"/>
</dbReference>
<dbReference type="SMR" id="O49403"/>
<dbReference type="BioGRID" id="12915">
    <property type="interactions" value="4"/>
</dbReference>
<dbReference type="FunCoup" id="O49403">
    <property type="interactions" value="815"/>
</dbReference>
<dbReference type="IntAct" id="O49403">
    <property type="interactions" value="1"/>
</dbReference>
<dbReference type="STRING" id="3702.O49403"/>
<dbReference type="iPTMnet" id="O49403"/>
<dbReference type="PaxDb" id="3702-AT4G18880.1"/>
<dbReference type="ProteomicsDB" id="232215"/>
<dbReference type="EnsemblPlants" id="AT4G18880.1">
    <property type="protein sequence ID" value="AT4G18880.1"/>
    <property type="gene ID" value="AT4G18880"/>
</dbReference>
<dbReference type="GeneID" id="827622"/>
<dbReference type="Gramene" id="AT4G18880.1">
    <property type="protein sequence ID" value="AT4G18880.1"/>
    <property type="gene ID" value="AT4G18880"/>
</dbReference>
<dbReference type="KEGG" id="ath:AT4G18880"/>
<dbReference type="Araport" id="AT4G18880"/>
<dbReference type="TAIR" id="AT4G18880">
    <property type="gene designation" value="HSF A4A"/>
</dbReference>
<dbReference type="eggNOG" id="KOG0627">
    <property type="taxonomic scope" value="Eukaryota"/>
</dbReference>
<dbReference type="HOGENOM" id="CLU_030308_0_0_1"/>
<dbReference type="InParanoid" id="O49403"/>
<dbReference type="OMA" id="SPRIIDM"/>
<dbReference type="PhylomeDB" id="O49403"/>
<dbReference type="PRO" id="PR:O49403"/>
<dbReference type="Proteomes" id="UP000006548">
    <property type="component" value="Chromosome 4"/>
</dbReference>
<dbReference type="ExpressionAtlas" id="O49403">
    <property type="expression patterns" value="baseline and differential"/>
</dbReference>
<dbReference type="GO" id="GO:0005737">
    <property type="term" value="C:cytoplasm"/>
    <property type="evidence" value="ECO:0007669"/>
    <property type="project" value="UniProtKB-SubCell"/>
</dbReference>
<dbReference type="GO" id="GO:0005634">
    <property type="term" value="C:nucleus"/>
    <property type="evidence" value="ECO:0000314"/>
    <property type="project" value="TAIR"/>
</dbReference>
<dbReference type="GO" id="GO:0003700">
    <property type="term" value="F:DNA-binding transcription factor activity"/>
    <property type="evidence" value="ECO:0000250"/>
    <property type="project" value="TAIR"/>
</dbReference>
<dbReference type="GO" id="GO:0042803">
    <property type="term" value="F:protein homodimerization activity"/>
    <property type="evidence" value="ECO:0000353"/>
    <property type="project" value="TAIR"/>
</dbReference>
<dbReference type="GO" id="GO:0000976">
    <property type="term" value="F:transcription cis-regulatory region binding"/>
    <property type="evidence" value="ECO:0000353"/>
    <property type="project" value="TAIR"/>
</dbReference>
<dbReference type="GO" id="GO:0045893">
    <property type="term" value="P:positive regulation of DNA-templated transcription"/>
    <property type="evidence" value="ECO:0000314"/>
    <property type="project" value="TAIR"/>
</dbReference>
<dbReference type="GO" id="GO:0006355">
    <property type="term" value="P:regulation of DNA-templated transcription"/>
    <property type="evidence" value="ECO:0000270"/>
    <property type="project" value="TAIR"/>
</dbReference>
<dbReference type="GO" id="GO:0000302">
    <property type="term" value="P:response to reactive oxygen species"/>
    <property type="evidence" value="ECO:0000315"/>
    <property type="project" value="TAIR"/>
</dbReference>
<dbReference type="FunFam" id="1.10.10.10:FF:000057">
    <property type="entry name" value="Heat shock transcription factor 1"/>
    <property type="match status" value="1"/>
</dbReference>
<dbReference type="Gene3D" id="1.10.10.10">
    <property type="entry name" value="Winged helix-like DNA-binding domain superfamily/Winged helix DNA-binding domain"/>
    <property type="match status" value="1"/>
</dbReference>
<dbReference type="InterPro" id="IPR000232">
    <property type="entry name" value="HSF_DNA-bd"/>
</dbReference>
<dbReference type="InterPro" id="IPR036388">
    <property type="entry name" value="WH-like_DNA-bd_sf"/>
</dbReference>
<dbReference type="InterPro" id="IPR036390">
    <property type="entry name" value="WH_DNA-bd_sf"/>
</dbReference>
<dbReference type="PANTHER" id="PTHR10015">
    <property type="entry name" value="HEAT SHOCK TRANSCRIPTION FACTOR"/>
    <property type="match status" value="1"/>
</dbReference>
<dbReference type="PANTHER" id="PTHR10015:SF161">
    <property type="entry name" value="HEAT STRESS TRANSCRIPTION FACTOR A-4A"/>
    <property type="match status" value="1"/>
</dbReference>
<dbReference type="Pfam" id="PF00447">
    <property type="entry name" value="HSF_DNA-bind"/>
    <property type="match status" value="1"/>
</dbReference>
<dbReference type="PRINTS" id="PR00056">
    <property type="entry name" value="HSFDOMAIN"/>
</dbReference>
<dbReference type="SMART" id="SM00415">
    <property type="entry name" value="HSF"/>
    <property type="match status" value="1"/>
</dbReference>
<dbReference type="SUPFAM" id="SSF58113">
    <property type="entry name" value="Apolipoprotein A-I"/>
    <property type="match status" value="1"/>
</dbReference>
<dbReference type="SUPFAM" id="SSF46785">
    <property type="entry name" value="Winged helix' DNA-binding domain"/>
    <property type="match status" value="1"/>
</dbReference>
<organism>
    <name type="scientific">Arabidopsis thaliana</name>
    <name type="common">Mouse-ear cress</name>
    <dbReference type="NCBI Taxonomy" id="3702"/>
    <lineage>
        <taxon>Eukaryota</taxon>
        <taxon>Viridiplantae</taxon>
        <taxon>Streptophyta</taxon>
        <taxon>Embryophyta</taxon>
        <taxon>Tracheophyta</taxon>
        <taxon>Spermatophyta</taxon>
        <taxon>Magnoliopsida</taxon>
        <taxon>eudicotyledons</taxon>
        <taxon>Gunneridae</taxon>
        <taxon>Pentapetalae</taxon>
        <taxon>rosids</taxon>
        <taxon>malvids</taxon>
        <taxon>Brassicales</taxon>
        <taxon>Brassicaceae</taxon>
        <taxon>Camelineae</taxon>
        <taxon>Arabidopsis</taxon>
    </lineage>
</organism>